<name>EFPL_ECOSE</name>
<feature type="chain" id="PRO_0000384910" description="Elongation factor P-like protein">
    <location>
        <begin position="1"/>
        <end position="190"/>
    </location>
</feature>
<organism>
    <name type="scientific">Escherichia coli (strain SE11)</name>
    <dbReference type="NCBI Taxonomy" id="409438"/>
    <lineage>
        <taxon>Bacteria</taxon>
        <taxon>Pseudomonadati</taxon>
        <taxon>Pseudomonadota</taxon>
        <taxon>Gammaproteobacteria</taxon>
        <taxon>Enterobacterales</taxon>
        <taxon>Enterobacteriaceae</taxon>
        <taxon>Escherichia</taxon>
    </lineage>
</organism>
<proteinExistence type="inferred from homology"/>
<dbReference type="EMBL" id="AP009240">
    <property type="protein sequence ID" value="BAG77964.1"/>
    <property type="status" value="ALT_INIT"/>
    <property type="molecule type" value="Genomic_DNA"/>
</dbReference>
<dbReference type="RefSeq" id="WP_001136827.1">
    <property type="nucleotide sequence ID" value="NC_011415.1"/>
</dbReference>
<dbReference type="SMR" id="B6I8M3"/>
<dbReference type="GeneID" id="93775010"/>
<dbReference type="KEGG" id="ecy:ECSE_2440"/>
<dbReference type="HOGENOM" id="CLU_074944_2_0_6"/>
<dbReference type="Proteomes" id="UP000008199">
    <property type="component" value="Chromosome"/>
</dbReference>
<dbReference type="GO" id="GO:0005829">
    <property type="term" value="C:cytosol"/>
    <property type="evidence" value="ECO:0007669"/>
    <property type="project" value="UniProtKB-ARBA"/>
</dbReference>
<dbReference type="GO" id="GO:0003746">
    <property type="term" value="F:translation elongation factor activity"/>
    <property type="evidence" value="ECO:0007669"/>
    <property type="project" value="UniProtKB-UniRule"/>
</dbReference>
<dbReference type="GO" id="GO:0043043">
    <property type="term" value="P:peptide biosynthetic process"/>
    <property type="evidence" value="ECO:0007669"/>
    <property type="project" value="InterPro"/>
</dbReference>
<dbReference type="CDD" id="cd04470">
    <property type="entry name" value="S1_EF-P_repeat_1"/>
    <property type="match status" value="1"/>
</dbReference>
<dbReference type="CDD" id="cd05794">
    <property type="entry name" value="S1_EF-P_repeat_2"/>
    <property type="match status" value="1"/>
</dbReference>
<dbReference type="FunFam" id="2.40.50.140:FF:000004">
    <property type="entry name" value="Elongation factor P"/>
    <property type="match status" value="1"/>
</dbReference>
<dbReference type="FunFam" id="2.30.30.30:FF:000011">
    <property type="entry name" value="Elongation factor P-like protein"/>
    <property type="match status" value="1"/>
</dbReference>
<dbReference type="FunFam" id="2.40.50.140:FF:000053">
    <property type="entry name" value="Elongation factor P-like protein"/>
    <property type="match status" value="1"/>
</dbReference>
<dbReference type="Gene3D" id="2.30.30.30">
    <property type="match status" value="1"/>
</dbReference>
<dbReference type="Gene3D" id="2.40.50.140">
    <property type="entry name" value="Nucleic acid-binding proteins"/>
    <property type="match status" value="2"/>
</dbReference>
<dbReference type="HAMAP" id="MF_00646">
    <property type="entry name" value="EFP"/>
    <property type="match status" value="1"/>
</dbReference>
<dbReference type="InterPro" id="IPR015365">
    <property type="entry name" value="Elong-fact-P_C"/>
</dbReference>
<dbReference type="InterPro" id="IPR012340">
    <property type="entry name" value="NA-bd_OB-fold"/>
</dbReference>
<dbReference type="InterPro" id="IPR014722">
    <property type="entry name" value="Rib_uL2_dom2"/>
</dbReference>
<dbReference type="InterPro" id="IPR020599">
    <property type="entry name" value="Transl_elong_fac_P/YeiP"/>
</dbReference>
<dbReference type="InterPro" id="IPR013185">
    <property type="entry name" value="Transl_elong_KOW-like"/>
</dbReference>
<dbReference type="InterPro" id="IPR011897">
    <property type="entry name" value="Transl_elong_p-like_YeiP"/>
</dbReference>
<dbReference type="InterPro" id="IPR001059">
    <property type="entry name" value="Transl_elong_P/YeiP_cen"/>
</dbReference>
<dbReference type="InterPro" id="IPR013852">
    <property type="entry name" value="Transl_elong_P/YeiP_CS"/>
</dbReference>
<dbReference type="InterPro" id="IPR008991">
    <property type="entry name" value="Translation_prot_SH3-like_sf"/>
</dbReference>
<dbReference type="NCBIfam" id="NF001810">
    <property type="entry name" value="PRK00529.1"/>
    <property type="match status" value="1"/>
</dbReference>
<dbReference type="NCBIfam" id="NF003392">
    <property type="entry name" value="PRK04542.1"/>
    <property type="match status" value="1"/>
</dbReference>
<dbReference type="NCBIfam" id="TIGR02178">
    <property type="entry name" value="yeiP"/>
    <property type="match status" value="1"/>
</dbReference>
<dbReference type="PANTHER" id="PTHR30053">
    <property type="entry name" value="ELONGATION FACTOR P"/>
    <property type="match status" value="1"/>
</dbReference>
<dbReference type="PANTHER" id="PTHR30053:SF14">
    <property type="entry name" value="TRANSLATION ELONGATION FACTOR KOW-LIKE DOMAIN-CONTAINING PROTEIN"/>
    <property type="match status" value="1"/>
</dbReference>
<dbReference type="Pfam" id="PF01132">
    <property type="entry name" value="EFP"/>
    <property type="match status" value="1"/>
</dbReference>
<dbReference type="Pfam" id="PF08207">
    <property type="entry name" value="EFP_N"/>
    <property type="match status" value="1"/>
</dbReference>
<dbReference type="Pfam" id="PF09285">
    <property type="entry name" value="Elong-fact-P_C"/>
    <property type="match status" value="1"/>
</dbReference>
<dbReference type="PIRSF" id="PIRSF005901">
    <property type="entry name" value="EF-P"/>
    <property type="match status" value="1"/>
</dbReference>
<dbReference type="SMART" id="SM01185">
    <property type="entry name" value="EFP"/>
    <property type="match status" value="1"/>
</dbReference>
<dbReference type="SMART" id="SM00841">
    <property type="entry name" value="Elong-fact-P_C"/>
    <property type="match status" value="1"/>
</dbReference>
<dbReference type="SUPFAM" id="SSF50249">
    <property type="entry name" value="Nucleic acid-binding proteins"/>
    <property type="match status" value="2"/>
</dbReference>
<dbReference type="SUPFAM" id="SSF50104">
    <property type="entry name" value="Translation proteins SH3-like domain"/>
    <property type="match status" value="1"/>
</dbReference>
<dbReference type="PROSITE" id="PS01275">
    <property type="entry name" value="EFP"/>
    <property type="match status" value="1"/>
</dbReference>
<evidence type="ECO:0000255" key="1">
    <source>
        <dbReference type="HAMAP-Rule" id="MF_00646"/>
    </source>
</evidence>
<evidence type="ECO:0000305" key="2"/>
<reference key="1">
    <citation type="journal article" date="2008" name="DNA Res.">
        <title>Complete genome sequence and comparative analysis of the wild-type commensal Escherichia coli strain SE11 isolated from a healthy adult.</title>
        <authorList>
            <person name="Oshima K."/>
            <person name="Toh H."/>
            <person name="Ogura Y."/>
            <person name="Sasamoto H."/>
            <person name="Morita H."/>
            <person name="Park S.-H."/>
            <person name="Ooka T."/>
            <person name="Iyoda S."/>
            <person name="Taylor T.D."/>
            <person name="Hayashi T."/>
            <person name="Itoh K."/>
            <person name="Hattori M."/>
        </authorList>
    </citation>
    <scope>NUCLEOTIDE SEQUENCE [LARGE SCALE GENOMIC DNA]</scope>
    <source>
        <strain>SE11</strain>
    </source>
</reference>
<protein>
    <recommendedName>
        <fullName evidence="1">Elongation factor P-like protein</fullName>
    </recommendedName>
</protein>
<comment type="similarity">
    <text evidence="1">Belongs to the elongation factor P family.</text>
</comment>
<comment type="sequence caution" evidence="2">
    <conflict type="erroneous initiation">
        <sequence resource="EMBL-CDS" id="BAG77964"/>
    </conflict>
</comment>
<sequence>MPRANEIKKGMVLNYNGKLLLVKDIDIQSPTARGAATLYKMRFSDVRTGLKVEERFKGDDIVDTVTLTRRYVDFSYVDGNEYVFMDKEDYTPYTFTKDQIEEELLFMPEGGMPDMQVLTWDGQLLALELPQTVDLEIVETAPGIKGASASARNKPATLSTGLVIQVPEYLSPGEKIRIHIEERRYMGRAD</sequence>
<gene>
    <name evidence="1" type="primary">yeiP</name>
    <name type="ordered locus">ECSE_2440</name>
</gene>
<accession>B6I8M3</accession>